<organism>
    <name type="scientific">Pyrobaculum aerophilum (strain ATCC 51768 / DSM 7523 / JCM 9630 / CIP 104966 / NBRC 100827 / IM2)</name>
    <dbReference type="NCBI Taxonomy" id="178306"/>
    <lineage>
        <taxon>Archaea</taxon>
        <taxon>Thermoproteota</taxon>
        <taxon>Thermoprotei</taxon>
        <taxon>Thermoproteales</taxon>
        <taxon>Thermoproteaceae</taxon>
        <taxon>Pyrobaculum</taxon>
    </lineage>
</organism>
<protein>
    <recommendedName>
        <fullName evidence="1">Small ribosomal subunit protein eS8</fullName>
    </recommendedName>
    <alternativeName>
        <fullName evidence="3">30S ribosomal protein S8e</fullName>
    </alternativeName>
</protein>
<accession>Q8ZTB8</accession>
<gene>
    <name evidence="1" type="primary">rps8e</name>
    <name type="ordered locus">PAE3331</name>
</gene>
<comment type="subunit">
    <text evidence="1">Part of the 30S ribosomal subunit.</text>
</comment>
<comment type="similarity">
    <text evidence="1">Belongs to the eukaryotic ribosomal protein eS8 family.</text>
</comment>
<keyword id="KW-1185">Reference proteome</keyword>
<keyword id="KW-0687">Ribonucleoprotein</keyword>
<keyword id="KW-0689">Ribosomal protein</keyword>
<sequence length="131" mass="14306">MKLGAYYKGGDLKKPSGGKKRKVRKTKKKALGGGPPQIPKLGENDTRIVERVRGGNLKVRLREAKFANVYIPKERKSVKAKIISIISTPANPDFARRNFIVKGSVIQTEVGKALVTSRPGQDGVINAVLIE</sequence>
<feature type="chain" id="PRO_0000122275" description="Small ribosomal subunit protein eS8">
    <location>
        <begin position="1"/>
        <end position="131"/>
    </location>
</feature>
<feature type="region of interest" description="Disordered" evidence="2">
    <location>
        <begin position="1"/>
        <end position="42"/>
    </location>
</feature>
<feature type="compositionally biased region" description="Basic residues" evidence="2">
    <location>
        <begin position="16"/>
        <end position="30"/>
    </location>
</feature>
<dbReference type="EMBL" id="AE009441">
    <property type="protein sequence ID" value="AAL64844.1"/>
    <property type="molecule type" value="Genomic_DNA"/>
</dbReference>
<dbReference type="RefSeq" id="WP_011009311.1">
    <property type="nucleotide sequence ID" value="NC_003364.1"/>
</dbReference>
<dbReference type="SMR" id="Q8ZTB8"/>
<dbReference type="FunCoup" id="Q8ZTB8">
    <property type="interactions" value="59"/>
</dbReference>
<dbReference type="STRING" id="178306.PAE3331"/>
<dbReference type="EnsemblBacteria" id="AAL64844">
    <property type="protein sequence ID" value="AAL64844"/>
    <property type="gene ID" value="PAE3331"/>
</dbReference>
<dbReference type="GeneID" id="1464034"/>
<dbReference type="KEGG" id="pai:PAE3331"/>
<dbReference type="PATRIC" id="fig|178306.9.peg.2508"/>
<dbReference type="eggNOG" id="arCOG04154">
    <property type="taxonomic scope" value="Archaea"/>
</dbReference>
<dbReference type="HOGENOM" id="CLU_080597_2_1_2"/>
<dbReference type="InParanoid" id="Q8ZTB8"/>
<dbReference type="Proteomes" id="UP000002439">
    <property type="component" value="Chromosome"/>
</dbReference>
<dbReference type="GO" id="GO:0022627">
    <property type="term" value="C:cytosolic small ribosomal subunit"/>
    <property type="evidence" value="ECO:0000318"/>
    <property type="project" value="GO_Central"/>
</dbReference>
<dbReference type="GO" id="GO:0003735">
    <property type="term" value="F:structural constituent of ribosome"/>
    <property type="evidence" value="ECO:0000318"/>
    <property type="project" value="GO_Central"/>
</dbReference>
<dbReference type="GO" id="GO:0000462">
    <property type="term" value="P:maturation of SSU-rRNA from tricistronic rRNA transcript (SSU-rRNA, 5.8S rRNA, LSU-rRNA)"/>
    <property type="evidence" value="ECO:0000318"/>
    <property type="project" value="GO_Central"/>
</dbReference>
<dbReference type="GO" id="GO:0006412">
    <property type="term" value="P:translation"/>
    <property type="evidence" value="ECO:0007669"/>
    <property type="project" value="UniProtKB-UniRule"/>
</dbReference>
<dbReference type="CDD" id="cd11382">
    <property type="entry name" value="Ribosomal_S8e"/>
    <property type="match status" value="1"/>
</dbReference>
<dbReference type="FunFam" id="2.40.10.310:FF:000002">
    <property type="entry name" value="30S ribosomal protein S8e"/>
    <property type="match status" value="1"/>
</dbReference>
<dbReference type="Gene3D" id="2.40.10.310">
    <property type="match status" value="1"/>
</dbReference>
<dbReference type="HAMAP" id="MF_00029">
    <property type="entry name" value="Ribosomal_eS8"/>
    <property type="match status" value="1"/>
</dbReference>
<dbReference type="InterPro" id="IPR001047">
    <property type="entry name" value="Ribosomal_eS8"/>
</dbReference>
<dbReference type="InterPro" id="IPR018283">
    <property type="entry name" value="Ribosomal_eS8_CS"/>
</dbReference>
<dbReference type="InterPro" id="IPR020919">
    <property type="entry name" value="Ribosomal_protein_eS8_arc"/>
</dbReference>
<dbReference type="InterPro" id="IPR022309">
    <property type="entry name" value="Ribosomal_Se8/biogenesis_NSA2"/>
</dbReference>
<dbReference type="NCBIfam" id="TIGR00307">
    <property type="entry name" value="eS8"/>
    <property type="match status" value="1"/>
</dbReference>
<dbReference type="PANTHER" id="PTHR10394">
    <property type="entry name" value="40S RIBOSOMAL PROTEIN S8"/>
    <property type="match status" value="1"/>
</dbReference>
<dbReference type="Pfam" id="PF01201">
    <property type="entry name" value="Ribosomal_S8e"/>
    <property type="match status" value="1"/>
</dbReference>
<dbReference type="PROSITE" id="PS01193">
    <property type="entry name" value="RIBOSOMAL_S8E"/>
    <property type="match status" value="1"/>
</dbReference>
<proteinExistence type="inferred from homology"/>
<evidence type="ECO:0000255" key="1">
    <source>
        <dbReference type="HAMAP-Rule" id="MF_00029"/>
    </source>
</evidence>
<evidence type="ECO:0000256" key="2">
    <source>
        <dbReference type="SAM" id="MobiDB-lite"/>
    </source>
</evidence>
<evidence type="ECO:0000305" key="3"/>
<name>RS8E_PYRAE</name>
<reference key="1">
    <citation type="journal article" date="2002" name="Proc. Natl. Acad. Sci. U.S.A.">
        <title>Genome sequence of the hyperthermophilic crenarchaeon Pyrobaculum aerophilum.</title>
        <authorList>
            <person name="Fitz-Gibbon S.T."/>
            <person name="Ladner H."/>
            <person name="Kim U.-J."/>
            <person name="Stetter K.O."/>
            <person name="Simon M.I."/>
            <person name="Miller J.H."/>
        </authorList>
    </citation>
    <scope>NUCLEOTIDE SEQUENCE [LARGE SCALE GENOMIC DNA]</scope>
    <source>
        <strain>ATCC 51768 / DSM 7523 / JCM 9630 / CIP 104966 / NBRC 100827 / IM2</strain>
    </source>
</reference>